<keyword id="KW-0975">Bacterial flagellum</keyword>
<keyword id="KW-0998">Cell outer membrane</keyword>
<keyword id="KW-0449">Lipoprotein</keyword>
<keyword id="KW-0472">Membrane</keyword>
<keyword id="KW-0564">Palmitate</keyword>
<keyword id="KW-1185">Reference proteome</keyword>
<keyword id="KW-0732">Signal</keyword>
<dbReference type="EMBL" id="AE016853">
    <property type="protein sequence ID" value="AAO55459.1"/>
    <property type="molecule type" value="Genomic_DNA"/>
</dbReference>
<dbReference type="RefSeq" id="NP_791764.1">
    <property type="nucleotide sequence ID" value="NC_004578.1"/>
</dbReference>
<dbReference type="RefSeq" id="WP_007244381.1">
    <property type="nucleotide sequence ID" value="NC_004578.1"/>
</dbReference>
<dbReference type="SMR" id="Q884Z5"/>
<dbReference type="STRING" id="223283.PSPTO_1941"/>
<dbReference type="DNASU" id="1183586"/>
<dbReference type="GeneID" id="1183586"/>
<dbReference type="KEGG" id="pst:PSPTO_1941"/>
<dbReference type="PATRIC" id="fig|223283.9.peg.1970"/>
<dbReference type="eggNOG" id="COG2063">
    <property type="taxonomic scope" value="Bacteria"/>
</dbReference>
<dbReference type="HOGENOM" id="CLU_069313_0_2_6"/>
<dbReference type="OrthoDB" id="9789463at2"/>
<dbReference type="PhylomeDB" id="Q884Z5"/>
<dbReference type="Proteomes" id="UP000002515">
    <property type="component" value="Chromosome"/>
</dbReference>
<dbReference type="GO" id="GO:0009427">
    <property type="term" value="C:bacterial-type flagellum basal body, distal rod, L ring"/>
    <property type="evidence" value="ECO:0007669"/>
    <property type="project" value="InterPro"/>
</dbReference>
<dbReference type="GO" id="GO:0009279">
    <property type="term" value="C:cell outer membrane"/>
    <property type="evidence" value="ECO:0007669"/>
    <property type="project" value="UniProtKB-SubCell"/>
</dbReference>
<dbReference type="GO" id="GO:0003774">
    <property type="term" value="F:cytoskeletal motor activity"/>
    <property type="evidence" value="ECO:0007669"/>
    <property type="project" value="InterPro"/>
</dbReference>
<dbReference type="GO" id="GO:0071973">
    <property type="term" value="P:bacterial-type flagellum-dependent cell motility"/>
    <property type="evidence" value="ECO:0007669"/>
    <property type="project" value="InterPro"/>
</dbReference>
<dbReference type="HAMAP" id="MF_00415">
    <property type="entry name" value="FlgH"/>
    <property type="match status" value="1"/>
</dbReference>
<dbReference type="InterPro" id="IPR000527">
    <property type="entry name" value="Flag_Lring"/>
</dbReference>
<dbReference type="NCBIfam" id="NF001304">
    <property type="entry name" value="PRK00249.1-4"/>
    <property type="match status" value="1"/>
</dbReference>
<dbReference type="PANTHER" id="PTHR34933">
    <property type="entry name" value="FLAGELLAR L-RING PROTEIN"/>
    <property type="match status" value="1"/>
</dbReference>
<dbReference type="PANTHER" id="PTHR34933:SF1">
    <property type="entry name" value="FLAGELLAR L-RING PROTEIN"/>
    <property type="match status" value="1"/>
</dbReference>
<dbReference type="Pfam" id="PF02107">
    <property type="entry name" value="FlgH"/>
    <property type="match status" value="1"/>
</dbReference>
<dbReference type="PRINTS" id="PR01008">
    <property type="entry name" value="FLGLRINGFLGH"/>
</dbReference>
<dbReference type="PROSITE" id="PS51257">
    <property type="entry name" value="PROKAR_LIPOPROTEIN"/>
    <property type="match status" value="1"/>
</dbReference>
<accession>Q884Z5</accession>
<proteinExistence type="inferred from homology"/>
<reference key="1">
    <citation type="journal article" date="2003" name="Proc. Natl. Acad. Sci. U.S.A.">
        <title>The complete genome sequence of the Arabidopsis and tomato pathogen Pseudomonas syringae pv. tomato DC3000.</title>
        <authorList>
            <person name="Buell C.R."/>
            <person name="Joardar V."/>
            <person name="Lindeberg M."/>
            <person name="Selengut J."/>
            <person name="Paulsen I.T."/>
            <person name="Gwinn M.L."/>
            <person name="Dodson R.J."/>
            <person name="DeBoy R.T."/>
            <person name="Durkin A.S."/>
            <person name="Kolonay J.F."/>
            <person name="Madupu R."/>
            <person name="Daugherty S.C."/>
            <person name="Brinkac L.M."/>
            <person name="Beanan M.J."/>
            <person name="Haft D.H."/>
            <person name="Nelson W.C."/>
            <person name="Davidsen T.M."/>
            <person name="Zafar N."/>
            <person name="Zhou L."/>
            <person name="Liu J."/>
            <person name="Yuan Q."/>
            <person name="Khouri H.M."/>
            <person name="Fedorova N.B."/>
            <person name="Tran B."/>
            <person name="Russell D."/>
            <person name="Berry K.J."/>
            <person name="Utterback T.R."/>
            <person name="Van Aken S.E."/>
            <person name="Feldblyum T.V."/>
            <person name="D'Ascenzo M."/>
            <person name="Deng W.-L."/>
            <person name="Ramos A.R."/>
            <person name="Alfano J.R."/>
            <person name="Cartinhour S."/>
            <person name="Chatterjee A.K."/>
            <person name="Delaney T.P."/>
            <person name="Lazarowitz S.G."/>
            <person name="Martin G.B."/>
            <person name="Schneider D.J."/>
            <person name="Tang X."/>
            <person name="Bender C.L."/>
            <person name="White O."/>
            <person name="Fraser C.M."/>
            <person name="Collmer A."/>
        </authorList>
    </citation>
    <scope>NUCLEOTIDE SEQUENCE [LARGE SCALE GENOMIC DNA]</scope>
    <source>
        <strain>ATCC BAA-871 / DC3000</strain>
    </source>
</reference>
<feature type="signal peptide" evidence="1">
    <location>
        <begin position="1"/>
        <end position="24"/>
    </location>
</feature>
<feature type="chain" id="PRO_0000009462" description="Flagellar L-ring protein">
    <location>
        <begin position="25"/>
        <end position="237"/>
    </location>
</feature>
<feature type="lipid moiety-binding region" description="N-palmitoyl cysteine" evidence="1">
    <location>
        <position position="25"/>
    </location>
</feature>
<feature type="lipid moiety-binding region" description="S-diacylglycerol cysteine" evidence="1">
    <location>
        <position position="25"/>
    </location>
</feature>
<sequence length="237" mass="24835">MNRPGFPRFSVLIASLCGITLLSGCVAPTAKPNDPYYAPVLPRTPMSAASNNGAIYQAGFEQNLYGDRKAFRVGDIITITLSERMAASKAATSAMSKDSTNSIGLTSLFGSGLTTNNPIGGNDLSLSAGYNGARTTKGDGKAAQSNSLTGSVTVTVADVLPNGILSVRGEKWMTLNTGDELVRIAGLVRADDIATDNTVSSTRIADARITYSGTGAFADTSQPGWFDRFFLSPLFPF</sequence>
<protein>
    <recommendedName>
        <fullName evidence="1">Flagellar L-ring protein</fullName>
    </recommendedName>
    <alternativeName>
        <fullName evidence="1">Basal body L-ring protein</fullName>
    </alternativeName>
</protein>
<comment type="function">
    <text evidence="1">Assembles around the rod to form the L-ring and probably protects the motor/basal body from shearing forces during rotation.</text>
</comment>
<comment type="subunit">
    <text evidence="1">The basal body constitutes a major portion of the flagellar organelle and consists of four rings (L,P,S, and M) mounted on a central rod.</text>
</comment>
<comment type="subcellular location">
    <subcellularLocation>
        <location evidence="1">Cell outer membrane</location>
        <topology evidence="1">Lipid-anchor</topology>
    </subcellularLocation>
    <subcellularLocation>
        <location evidence="1">Bacterial flagellum basal body</location>
    </subcellularLocation>
</comment>
<comment type="similarity">
    <text evidence="1">Belongs to the FlgH family.</text>
</comment>
<gene>
    <name evidence="1" type="primary">flgH</name>
    <name type="ordered locus">PSPTO_1941</name>
</gene>
<organism>
    <name type="scientific">Pseudomonas syringae pv. tomato (strain ATCC BAA-871 / DC3000)</name>
    <dbReference type="NCBI Taxonomy" id="223283"/>
    <lineage>
        <taxon>Bacteria</taxon>
        <taxon>Pseudomonadati</taxon>
        <taxon>Pseudomonadota</taxon>
        <taxon>Gammaproteobacteria</taxon>
        <taxon>Pseudomonadales</taxon>
        <taxon>Pseudomonadaceae</taxon>
        <taxon>Pseudomonas</taxon>
    </lineage>
</organism>
<evidence type="ECO:0000255" key="1">
    <source>
        <dbReference type="HAMAP-Rule" id="MF_00415"/>
    </source>
</evidence>
<name>FLGH_PSESM</name>